<comment type="function">
    <text evidence="1 5">Hydrolase that deubiquitinates target proteins. May play a role in regulating the levels of endogenous siRNA biogenesis (PubMed:32338603).</text>
</comment>
<comment type="catalytic activity">
    <reaction evidence="1">
        <text>Thiol-dependent hydrolysis of ester, thioester, amide, peptide and isopeptide bonds formed by the C-terminal Gly of ubiquitin (a 76-residue protein attached to proteins as an intracellular targeting signal).</text>
        <dbReference type="EC" id="3.4.19.12"/>
    </reaction>
</comment>
<comment type="subcellular location">
    <subcellularLocation>
        <location evidence="5">Nucleus</location>
    </subcellularLocation>
    <text evidence="5">Localizes to the nucleus of germ cells.</text>
</comment>
<comment type="similarity">
    <text evidence="6">Belongs to the peptidase C19 family.</text>
</comment>
<accession>Q7JKC3</accession>
<proteinExistence type="inferred from homology"/>
<protein>
    <recommendedName>
        <fullName>Ubiquitin carboxyl-terminal hydrolase 7</fullName>
        <ecNumber evidence="1">3.4.19.12</ecNumber>
    </recommendedName>
    <alternativeName>
        <fullName>Deubiquitinating enzyme 7</fullName>
    </alternativeName>
    <alternativeName>
        <fullName>Ubiquitin thioesterase 7</fullName>
    </alternativeName>
    <alternativeName>
        <fullName>Ubiquitin-specific-processing protease 7</fullName>
    </alternativeName>
</protein>
<dbReference type="EC" id="3.4.19.12" evidence="1"/>
<dbReference type="EMBL" id="BX284605">
    <property type="protein sequence ID" value="CAE54910.1"/>
    <property type="molecule type" value="Genomic_DNA"/>
</dbReference>
<dbReference type="RefSeq" id="NP_001024012.1">
    <property type="nucleotide sequence ID" value="NM_001028841.5"/>
</dbReference>
<dbReference type="SMR" id="Q7JKC3"/>
<dbReference type="BioGRID" id="44565">
    <property type="interactions" value="8"/>
</dbReference>
<dbReference type="FunCoup" id="Q7JKC3">
    <property type="interactions" value="3664"/>
</dbReference>
<dbReference type="STRING" id="6239.H19N07.2k.1"/>
<dbReference type="MEROPS" id="C19.A54"/>
<dbReference type="iPTMnet" id="Q7JKC3"/>
<dbReference type="PaxDb" id="6239-H19N07.2k"/>
<dbReference type="EnsemblMetazoa" id="H19N07.2c.1">
    <property type="protein sequence ID" value="H19N07.2c.1"/>
    <property type="gene ID" value="WBGene00010406"/>
</dbReference>
<dbReference type="GeneID" id="179538"/>
<dbReference type="KEGG" id="cel:CELE_H19N07.2"/>
<dbReference type="UCSC" id="H19N07.2a">
    <property type="organism name" value="c. elegans"/>
</dbReference>
<dbReference type="AGR" id="WB:WBGene00010406"/>
<dbReference type="CTD" id="179538"/>
<dbReference type="WormBase" id="H19N07.2c">
    <property type="protein sequence ID" value="CE36180"/>
    <property type="gene ID" value="WBGene00010406"/>
    <property type="gene designation" value="math-33"/>
</dbReference>
<dbReference type="eggNOG" id="KOG1863">
    <property type="taxonomic scope" value="Eukaryota"/>
</dbReference>
<dbReference type="GeneTree" id="ENSGT00940000174573"/>
<dbReference type="InParanoid" id="Q7JKC3"/>
<dbReference type="OrthoDB" id="289038at2759"/>
<dbReference type="PhylomeDB" id="Q7JKC3"/>
<dbReference type="Reactome" id="R-CEL-5689880">
    <property type="pathway name" value="Ub-specific processing proteases"/>
</dbReference>
<dbReference type="Reactome" id="R-CEL-6781823">
    <property type="pathway name" value="Formation of TC-NER Pre-Incision Complex"/>
</dbReference>
<dbReference type="Reactome" id="R-CEL-6782135">
    <property type="pathway name" value="Dual incision in TC-NER"/>
</dbReference>
<dbReference type="Reactome" id="R-CEL-6782210">
    <property type="pathway name" value="Gap-filling DNA repair synthesis and ligation in TC-NER"/>
</dbReference>
<dbReference type="Reactome" id="R-CEL-8866652">
    <property type="pathway name" value="Synthesis of active ubiquitin: roles of E1 and E2 enzymes"/>
</dbReference>
<dbReference type="Reactome" id="R-CEL-8948747">
    <property type="pathway name" value="Regulation of PTEN localization"/>
</dbReference>
<dbReference type="PRO" id="PR:Q7JKC3"/>
<dbReference type="Proteomes" id="UP000001940">
    <property type="component" value="Chromosome V"/>
</dbReference>
<dbReference type="Bgee" id="WBGene00010406">
    <property type="expression patterns" value="Expressed in embryo and 4 other cell types or tissues"/>
</dbReference>
<dbReference type="ExpressionAtlas" id="Q7JKC3">
    <property type="expression patterns" value="baseline and differential"/>
</dbReference>
<dbReference type="GO" id="GO:0005737">
    <property type="term" value="C:cytoplasm"/>
    <property type="evidence" value="ECO:0000314"/>
    <property type="project" value="WormBase"/>
</dbReference>
<dbReference type="GO" id="GO:0005829">
    <property type="term" value="C:cytosol"/>
    <property type="evidence" value="ECO:0000318"/>
    <property type="project" value="GO_Central"/>
</dbReference>
<dbReference type="GO" id="GO:0005634">
    <property type="term" value="C:nucleus"/>
    <property type="evidence" value="ECO:0000314"/>
    <property type="project" value="UniProtKB"/>
</dbReference>
<dbReference type="GO" id="GO:0004843">
    <property type="term" value="F:cysteine-type deubiquitinase activity"/>
    <property type="evidence" value="ECO:0000314"/>
    <property type="project" value="WormBase"/>
</dbReference>
<dbReference type="GO" id="GO:0061629">
    <property type="term" value="F:RNA polymerase II-specific DNA-binding transcription factor binding"/>
    <property type="evidence" value="ECO:0000353"/>
    <property type="project" value="WormBase"/>
</dbReference>
<dbReference type="GO" id="GO:0008595">
    <property type="term" value="P:anterior/posterior axis specification, embryo"/>
    <property type="evidence" value="ECO:0000315"/>
    <property type="project" value="WormBase"/>
</dbReference>
<dbReference type="GO" id="GO:0031581">
    <property type="term" value="P:hemidesmosome assembly"/>
    <property type="evidence" value="ECO:0000316"/>
    <property type="project" value="WormBase"/>
</dbReference>
<dbReference type="GO" id="GO:0051661">
    <property type="term" value="P:maintenance of centrosome location"/>
    <property type="evidence" value="ECO:0000315"/>
    <property type="project" value="WormBase"/>
</dbReference>
<dbReference type="GO" id="GO:0016579">
    <property type="term" value="P:protein deubiquitination"/>
    <property type="evidence" value="ECO:0000250"/>
    <property type="project" value="UniProtKB"/>
</dbReference>
<dbReference type="GO" id="GO:0031647">
    <property type="term" value="P:regulation of protein stability"/>
    <property type="evidence" value="ECO:0000318"/>
    <property type="project" value="GO_Central"/>
</dbReference>
<dbReference type="GO" id="GO:0006511">
    <property type="term" value="P:ubiquitin-dependent protein catabolic process"/>
    <property type="evidence" value="ECO:0000315"/>
    <property type="project" value="UniProtKB"/>
</dbReference>
<dbReference type="CDD" id="cd03772">
    <property type="entry name" value="MATH_HAUSP"/>
    <property type="match status" value="1"/>
</dbReference>
<dbReference type="CDD" id="cd02659">
    <property type="entry name" value="peptidase_C19C"/>
    <property type="match status" value="1"/>
</dbReference>
<dbReference type="FunFam" id="2.60.210.10:FF:000015">
    <property type="entry name" value="Ubiquitin carboxyl-terminal hydrolase"/>
    <property type="match status" value="1"/>
</dbReference>
<dbReference type="FunFam" id="3.10.20.90:FF:000275">
    <property type="entry name" value="Ubiquitin carboxyl-terminal hydrolase"/>
    <property type="match status" value="1"/>
</dbReference>
<dbReference type="FunFam" id="3.90.70.10:FF:000044">
    <property type="entry name" value="Ubiquitin carboxyl-terminal hydrolase 13"/>
    <property type="match status" value="1"/>
</dbReference>
<dbReference type="Gene3D" id="2.60.210.10">
    <property type="entry name" value="Apoptosis, Tumor Necrosis Factor Receptor Associated Protein 2, Chain A"/>
    <property type="match status" value="1"/>
</dbReference>
<dbReference type="Gene3D" id="3.90.70.10">
    <property type="entry name" value="Cysteine proteinases"/>
    <property type="match status" value="1"/>
</dbReference>
<dbReference type="Gene3D" id="3.10.20.90">
    <property type="entry name" value="Phosphatidylinositol 3-kinase Catalytic Subunit, Chain A, domain 1"/>
    <property type="match status" value="1"/>
</dbReference>
<dbReference type="InterPro" id="IPR002083">
    <property type="entry name" value="MATH/TRAF_dom"/>
</dbReference>
<dbReference type="InterPro" id="IPR038765">
    <property type="entry name" value="Papain-like_cys_pep_sf"/>
</dbReference>
<dbReference type="InterPro" id="IPR050164">
    <property type="entry name" value="Peptidase_C19"/>
</dbReference>
<dbReference type="InterPro" id="IPR001394">
    <property type="entry name" value="Peptidase_C19_UCH"/>
</dbReference>
<dbReference type="InterPro" id="IPR008974">
    <property type="entry name" value="TRAF-like"/>
</dbReference>
<dbReference type="InterPro" id="IPR024729">
    <property type="entry name" value="USP7_ICP0-binding_dom"/>
</dbReference>
<dbReference type="InterPro" id="IPR029346">
    <property type="entry name" value="USP_C"/>
</dbReference>
<dbReference type="InterPro" id="IPR018200">
    <property type="entry name" value="USP_CS"/>
</dbReference>
<dbReference type="InterPro" id="IPR028889">
    <property type="entry name" value="USP_dom"/>
</dbReference>
<dbReference type="PANTHER" id="PTHR24006">
    <property type="entry name" value="UBIQUITIN CARBOXYL-TERMINAL HYDROLASE"/>
    <property type="match status" value="1"/>
</dbReference>
<dbReference type="PANTHER" id="PTHR24006:SF644">
    <property type="entry name" value="UBIQUITIN CARBOXYL-TERMINAL HYDROLASE 7"/>
    <property type="match status" value="1"/>
</dbReference>
<dbReference type="Pfam" id="PF00917">
    <property type="entry name" value="MATH"/>
    <property type="match status" value="1"/>
</dbReference>
<dbReference type="Pfam" id="PF00443">
    <property type="entry name" value="UCH"/>
    <property type="match status" value="1"/>
</dbReference>
<dbReference type="Pfam" id="PF14533">
    <property type="entry name" value="USP7_C2"/>
    <property type="match status" value="1"/>
</dbReference>
<dbReference type="Pfam" id="PF12436">
    <property type="entry name" value="USP7_ICP0_bdg"/>
    <property type="match status" value="1"/>
</dbReference>
<dbReference type="SMART" id="SM00061">
    <property type="entry name" value="MATH"/>
    <property type="match status" value="1"/>
</dbReference>
<dbReference type="SUPFAM" id="SSF54001">
    <property type="entry name" value="Cysteine proteinases"/>
    <property type="match status" value="1"/>
</dbReference>
<dbReference type="SUPFAM" id="SSF49599">
    <property type="entry name" value="TRAF domain-like"/>
    <property type="match status" value="1"/>
</dbReference>
<dbReference type="PROSITE" id="PS50144">
    <property type="entry name" value="MATH"/>
    <property type="match status" value="1"/>
</dbReference>
<dbReference type="PROSITE" id="PS00972">
    <property type="entry name" value="USP_1"/>
    <property type="match status" value="1"/>
</dbReference>
<dbReference type="PROSITE" id="PS00973">
    <property type="entry name" value="USP_2"/>
    <property type="match status" value="1"/>
</dbReference>
<dbReference type="PROSITE" id="PS50235">
    <property type="entry name" value="USP_3"/>
    <property type="match status" value="1"/>
</dbReference>
<evidence type="ECO:0000250" key="1">
    <source>
        <dbReference type="UniProtKB" id="Q93009"/>
    </source>
</evidence>
<evidence type="ECO:0000255" key="2">
    <source>
        <dbReference type="PROSITE-ProRule" id="PRU00129"/>
    </source>
</evidence>
<evidence type="ECO:0000255" key="3">
    <source>
        <dbReference type="PROSITE-ProRule" id="PRU10092"/>
    </source>
</evidence>
<evidence type="ECO:0000255" key="4">
    <source>
        <dbReference type="PROSITE-ProRule" id="PRU10093"/>
    </source>
</evidence>
<evidence type="ECO:0000269" key="5">
    <source>
    </source>
</evidence>
<evidence type="ECO:0000305" key="6"/>
<evidence type="ECO:0000312" key="7">
    <source>
        <dbReference type="WormBase" id="H19N07.2c"/>
    </source>
</evidence>
<sequence length="1135" mass="131597">MQCSPDPEDLLIVPTHDIPSYDESLDPFGPEGHLSLDIDCFSKFMSRSDNRIMSKPIIVRGIPWRILAICRNQQGSRHSMNSRVNRSNFNFGFFLQCNNDELLQKRGMWRCYGTAVLEVLNADGPSIQKKIHHSFHNTEVDWGFSNYDQYDTLCNPKDGYVVNDTIKLRCRFTADVPTGANYMWDSKRHTGCIGLRNQGATCYMNSILQSFYFTTGFRRAVYNMDVGTEPNESNIVLAMQRVFYELQMASEAVETNSLTRAFGWDKLDAFNQHDVQEFCRVLLDNLETKMKGTSEEKSIPNLFRGNMKSYIKCLDVDYESSRTESFYDVQLNVLGMDSLERAFEAYTTSEILDDENKYDAGDHGLQRAEKGVKFVELPPILHVQLMRFQYCGVEQKINERFSFPEKMNLASCCELGPMLTEEDCVYSLHAVLVHSGEFHGGHYVTYINVNLHESAVDPTSSAKWCKFDDDVVSRTTTDDAIVSNFGGEKTMNSSAYMLVYVRDNAIDQFLAPIPDSQIPQSVSRTFEMERLHRNREKKKLEEEQLCMGIVLVTPDIVASNHSFDLVDQSIVHDSIPHETVWKHMFTAELYQFVHDRLFEKSAMQKIDMFDSDDEARQARRDNLRRIKSKKFNFRLWRMTDSYSLERTTQKLTSRLRPSEFIDCKTDTRLDTLLSQDFETIYVEFSNNIERPLCEYDTARDLLFFVKYYDTMTDKFTIIGHTMFDCHKRFNLYRSMLCEMIGLPADTELKYYMEHAASYLELVDLTQNYSIGRLVEEQDGGILVVEKVETSTSTQNAKQKMNELFLDVEVEFVQSFYNKKPEEEPFEQFVKRICLDDKLFTVAEEIGARLNVDPKKVLIWTRVSGSRFEPFFDDYMLNTCKGLMTRPVHDPRAYKRYRVQYAIMPFDIDEISKHRIQTKLFWQLPNGHVEELTLFPLKEGTVIDIINEAKRYYPFVEGGSGKFRLLQIGAPPLSNQRVYQIYGENTLISDLDQRTMYKLVSSQALHCRLEEVPIDELDMSPGEFLCPVVHFDREPTKLFGLSFVIKIRNNELMTEVRDRLRRKLNDVSDADFAKYKFALLSRDKLQLCRTIEFNNGEKVNLADMANQTTGVPQVYIGLDHKSPIQHSSEAAIRILN</sequence>
<name>UBP7_CAEEL</name>
<organism>
    <name type="scientific">Caenorhabditis elegans</name>
    <dbReference type="NCBI Taxonomy" id="6239"/>
    <lineage>
        <taxon>Eukaryota</taxon>
        <taxon>Metazoa</taxon>
        <taxon>Ecdysozoa</taxon>
        <taxon>Nematoda</taxon>
        <taxon>Chromadorea</taxon>
        <taxon>Rhabditida</taxon>
        <taxon>Rhabditina</taxon>
        <taxon>Rhabditomorpha</taxon>
        <taxon>Rhabditoidea</taxon>
        <taxon>Rhabditidae</taxon>
        <taxon>Peloderinae</taxon>
        <taxon>Caenorhabditis</taxon>
    </lineage>
</organism>
<gene>
    <name evidence="7" type="primary">math-33</name>
    <name evidence="7" type="synonym">usp-7</name>
    <name evidence="7" type="ORF">H19N07.2</name>
</gene>
<feature type="chain" id="PRO_0000268010" description="Ubiquitin carboxyl-terminal hydrolase 7">
    <location>
        <begin position="1"/>
        <end position="1135"/>
    </location>
</feature>
<feature type="domain" description="MATH" evidence="2">
    <location>
        <begin position="31"/>
        <end position="172"/>
    </location>
</feature>
<feature type="domain" description="USP">
    <location>
        <begin position="193"/>
        <end position="503"/>
    </location>
</feature>
<feature type="active site" description="Nucleophile" evidence="3 4">
    <location>
        <position position="202"/>
    </location>
</feature>
<feature type="active site" description="Proton acceptor" evidence="3 4">
    <location>
        <position position="442"/>
    </location>
</feature>
<reference key="1">
    <citation type="journal article" date="1998" name="Science">
        <title>Genome sequence of the nematode C. elegans: a platform for investigating biology.</title>
        <authorList>
            <consortium name="The C. elegans sequencing consortium"/>
        </authorList>
    </citation>
    <scope>NUCLEOTIDE SEQUENCE [LARGE SCALE GENOMIC DNA]</scope>
    <source>
        <strain>Bristol N2</strain>
    </source>
</reference>
<reference key="2">
    <citation type="journal article" date="2020" name="Elife">
        <title>A Tudor domain protein, SIMR-1, promotes siRNA production at piRNA-targeted mRNAs in C. elegans.</title>
        <authorList>
            <person name="Manage K.I."/>
            <person name="Rogers A.K."/>
            <person name="Wallis D.C."/>
            <person name="Uebel C.J."/>
            <person name="Anderson D.C."/>
            <person name="Nguyen D.A.H."/>
            <person name="Arca K."/>
            <person name="Brown K.C."/>
            <person name="Cordeiro Rodrigues R.J."/>
            <person name="de Albuquerque B.F.M."/>
            <person name="Ketting R.F."/>
            <person name="Montgomery T.A."/>
            <person name="Phillips C.M."/>
        </authorList>
    </citation>
    <scope>FUNCTION</scope>
    <scope>SUBCELLULAR LOCATION</scope>
</reference>
<keyword id="KW-0378">Hydrolase</keyword>
<keyword id="KW-0539">Nucleus</keyword>
<keyword id="KW-0645">Protease</keyword>
<keyword id="KW-1185">Reference proteome</keyword>
<keyword id="KW-0788">Thiol protease</keyword>
<keyword id="KW-0833">Ubl conjugation pathway</keyword>